<accession>V6RPN0</accession>
<gene>
    <name evidence="5" type="primary">ERG9</name>
    <name type="ORF">FG09381</name>
    <name type="ORF">FGRAMPH1_01T27225</name>
</gene>
<comment type="function">
    <text evidence="1 7">Squalene synthase; part of the third module of ergosterol biosynthesis pathway that includes the late steps of the pathway (By similarity). ERG9 produces squalene from 2 farnesyl pyrophosphate moieties (By similarity). The third module or late pathway involves the ergosterol synthesis itself through consecutive reactions that mainly occur in the endoplasmic reticulum (ER) membrane. Firstly, the squalene synthase ERG9 catalyzes the condensation of 2 farnesyl pyrophosphate moieties to form squalene, which is the precursor of all steroids. Squalene synthase is crucial for balancing the incorporation of farnesyl diphosphate (FPP) into sterol and nonsterol isoprene synthesis. Secondly, squalene is converted into lanosterol by the consecutive action of the squalene epoxidase ERG1 and the lanosterol synthase ERG7. Then, the delta(24)-sterol C-methyltransferase ERG6 methylates lanosterol at C-24 to produce eburicol. Eburicol is the substrate of the sterol 14-alpha demethylase encoded by CYP51A, CYP51B and CYP51C, to yield 4,4,24-trimethyl ergosta-8,14,24(28)-trienol. CYP51B encodes the enzyme primarily responsible for sterol 14-alpha-demethylation, and plays an essential role in ascospore formation. CYP51A encodes an additional sterol 14-alpha-demethylase, induced on ergosterol depletion and responsible for the intrinsic variation in azole sensitivity. The third CYP51 isoform, CYP51C, does not encode a sterol 14-alpha-demethylase, but is required for full virulence on host wheat ears. The C-14 reductase ERG24 then reduces the C14=C15 double bond which leads to 4,4-dimethylfecosterol. A sequence of further demethylations at C-4, involving the C-4 demethylation complex containing the C-4 methylsterol oxidases ERG25, the sterol-4-alpha-carboxylate 3-dehydrogenase ERG26 and the 3-keto-steroid reductase ERG27, leads to the production of fecosterol via 4-methylfecosterol. ERG28 has a role as a scaffold to help anchor ERG25, ERG26 and ERG27 to the endoplasmic reticulum. The C-8 sterol isomerase ERG2 then catalyzes the reaction which results in unsaturation at C-7 in the B ring of sterols and thus converts fecosterol to episterol. The sterol-C5-desaturases ERG3A and ERG3BB then catalyze the introduction of a C-5 double bond in the B ring to produce 5-dehydroepisterol. The C-22 sterol desaturases ERG5A and ERG5B further convert 5-dehydroepisterol into ergosta-5,7,22,24(28)-tetraen-3beta-ol by forming the C-22(23) double bond in the sterol side chain. Finally, ergosta-5,7,22,24(28)-tetraen-3beta-ol is substrate of the C-24(28) sterol reductase ERG4 to produce ergosterol (Probable).</text>
</comment>
<comment type="catalytic activity">
    <reaction evidence="1">
        <text>2 (2E,6E)-farnesyl diphosphate + NADPH + H(+) = squalene + 2 diphosphate + NADP(+)</text>
        <dbReference type="Rhea" id="RHEA:32295"/>
        <dbReference type="ChEBI" id="CHEBI:15378"/>
        <dbReference type="ChEBI" id="CHEBI:15440"/>
        <dbReference type="ChEBI" id="CHEBI:33019"/>
        <dbReference type="ChEBI" id="CHEBI:57783"/>
        <dbReference type="ChEBI" id="CHEBI:58349"/>
        <dbReference type="ChEBI" id="CHEBI:175763"/>
        <dbReference type="EC" id="2.5.1.21"/>
    </reaction>
    <physiologicalReaction direction="left-to-right" evidence="1">
        <dbReference type="Rhea" id="RHEA:32296"/>
    </physiologicalReaction>
</comment>
<comment type="catalytic activity">
    <reaction evidence="1">
        <text>2 (2E,6E)-farnesyl diphosphate + NADH + H(+) = squalene + 2 diphosphate + NAD(+)</text>
        <dbReference type="Rhea" id="RHEA:32299"/>
        <dbReference type="ChEBI" id="CHEBI:15378"/>
        <dbReference type="ChEBI" id="CHEBI:15440"/>
        <dbReference type="ChEBI" id="CHEBI:33019"/>
        <dbReference type="ChEBI" id="CHEBI:57540"/>
        <dbReference type="ChEBI" id="CHEBI:57945"/>
        <dbReference type="ChEBI" id="CHEBI:175763"/>
        <dbReference type="EC" id="2.5.1.21"/>
    </reaction>
    <physiologicalReaction direction="left-to-right" evidence="1">
        <dbReference type="Rhea" id="RHEA:32300"/>
    </physiologicalReaction>
</comment>
<comment type="cofactor">
    <cofactor evidence="1">
        <name>Mg(2+)</name>
        <dbReference type="ChEBI" id="CHEBI:18420"/>
    </cofactor>
</comment>
<comment type="pathway">
    <text evidence="7">Terpene metabolism; lanosterol biosynthesis; lanosterol from farnesyl diphosphate: step 1/3.</text>
</comment>
<comment type="pathway">
    <text evidence="7">Steroid metabolism; ergosterol biosynthesis.</text>
</comment>
<comment type="subcellular location">
    <subcellularLocation>
        <location evidence="1">Endoplasmic reticulum membrane</location>
        <topology evidence="2">Single-pass membrane protein</topology>
    </subcellularLocation>
    <subcellularLocation>
        <location evidence="1">Microsome</location>
    </subcellularLocation>
</comment>
<comment type="induction">
    <text evidence="3">Expression is increased in the absence of the C-24(28) sterol reductase ERG4.</text>
</comment>
<comment type="miscellaneous">
    <text evidence="4">In Fusarium, the biosynthesis pathway of the sterol precursors leading to the prevalent sterol ergosterol differs from yeast. The ringsystem of lanosterol in S.cerevisiae is firstly demethylised in three enzymatic steps leading to the intermediate zymosterol and secondly a methyl group is added to zymosterol by the sterol 24-C-methyltransferase to form fecosterol. In Fusarium, lanosterol is firstly transmethylated by the sterol 24-C-methyltransferase leading to the intermediate eburicol and secondly demethylated in three steps to form fecosterol.</text>
</comment>
<comment type="similarity">
    <text evidence="6">Belongs to the phytoene/squalene synthase family.</text>
</comment>
<feature type="chain" id="PRO_0000454350" description="Squalene synthase ERG9">
    <location>
        <begin position="1"/>
        <end position="462"/>
    </location>
</feature>
<feature type="transmembrane region" description="Helical" evidence="2">
    <location>
        <begin position="406"/>
        <end position="426"/>
    </location>
</feature>
<reference key="1">
    <citation type="journal article" date="2007" name="Science">
        <title>The Fusarium graminearum genome reveals a link between localized polymorphism and pathogen specialization.</title>
        <authorList>
            <person name="Cuomo C.A."/>
            <person name="Gueldener U."/>
            <person name="Xu J.-R."/>
            <person name="Trail F."/>
            <person name="Turgeon B.G."/>
            <person name="Di Pietro A."/>
            <person name="Walton J.D."/>
            <person name="Ma L.-J."/>
            <person name="Baker S.E."/>
            <person name="Rep M."/>
            <person name="Adam G."/>
            <person name="Antoniw J."/>
            <person name="Baldwin T."/>
            <person name="Calvo S.E."/>
            <person name="Chang Y.-L."/>
            <person name="DeCaprio D."/>
            <person name="Gale L.R."/>
            <person name="Gnerre S."/>
            <person name="Goswami R.S."/>
            <person name="Hammond-Kosack K."/>
            <person name="Harris L.J."/>
            <person name="Hilburn K."/>
            <person name="Kennell J.C."/>
            <person name="Kroken S."/>
            <person name="Magnuson J.K."/>
            <person name="Mannhaupt G."/>
            <person name="Mauceli E.W."/>
            <person name="Mewes H.-W."/>
            <person name="Mitterbauer R."/>
            <person name="Muehlbauer G."/>
            <person name="Muensterkoetter M."/>
            <person name="Nelson D."/>
            <person name="O'Donnell K."/>
            <person name="Ouellet T."/>
            <person name="Qi W."/>
            <person name="Quesneville H."/>
            <person name="Roncero M.I.G."/>
            <person name="Seong K.-Y."/>
            <person name="Tetko I.V."/>
            <person name="Urban M."/>
            <person name="Waalwijk C."/>
            <person name="Ward T.J."/>
            <person name="Yao J."/>
            <person name="Birren B.W."/>
            <person name="Kistler H.C."/>
        </authorList>
    </citation>
    <scope>NUCLEOTIDE SEQUENCE [LARGE SCALE GENOMIC DNA]</scope>
    <source>
        <strain>ATCC MYA-4620 / CBS 123657 / FGSC 9075 / NRRL 31084 / PH-1</strain>
    </source>
</reference>
<reference key="2">
    <citation type="journal article" date="2010" name="Nature">
        <title>Comparative genomics reveals mobile pathogenicity chromosomes in Fusarium.</title>
        <authorList>
            <person name="Ma L.-J."/>
            <person name="van der Does H.C."/>
            <person name="Borkovich K.A."/>
            <person name="Coleman J.J."/>
            <person name="Daboussi M.-J."/>
            <person name="Di Pietro A."/>
            <person name="Dufresne M."/>
            <person name="Freitag M."/>
            <person name="Grabherr M."/>
            <person name="Henrissat B."/>
            <person name="Houterman P.M."/>
            <person name="Kang S."/>
            <person name="Shim W.-B."/>
            <person name="Woloshuk C."/>
            <person name="Xie X."/>
            <person name="Xu J.-R."/>
            <person name="Antoniw J."/>
            <person name="Baker S.E."/>
            <person name="Bluhm B.H."/>
            <person name="Breakspear A."/>
            <person name="Brown D.W."/>
            <person name="Butchko R.A.E."/>
            <person name="Chapman S."/>
            <person name="Coulson R."/>
            <person name="Coutinho P.M."/>
            <person name="Danchin E.G.J."/>
            <person name="Diener A."/>
            <person name="Gale L.R."/>
            <person name="Gardiner D.M."/>
            <person name="Goff S."/>
            <person name="Hammond-Kosack K.E."/>
            <person name="Hilburn K."/>
            <person name="Hua-Van A."/>
            <person name="Jonkers W."/>
            <person name="Kazan K."/>
            <person name="Kodira C.D."/>
            <person name="Koehrsen M."/>
            <person name="Kumar L."/>
            <person name="Lee Y.-H."/>
            <person name="Li L."/>
            <person name="Manners J.M."/>
            <person name="Miranda-Saavedra D."/>
            <person name="Mukherjee M."/>
            <person name="Park G."/>
            <person name="Park J."/>
            <person name="Park S.-Y."/>
            <person name="Proctor R.H."/>
            <person name="Regev A."/>
            <person name="Ruiz-Roldan M.C."/>
            <person name="Sain D."/>
            <person name="Sakthikumar S."/>
            <person name="Sykes S."/>
            <person name="Schwartz D.C."/>
            <person name="Turgeon B.G."/>
            <person name="Wapinski I."/>
            <person name="Yoder O."/>
            <person name="Young S."/>
            <person name="Zeng Q."/>
            <person name="Zhou S."/>
            <person name="Galagan J."/>
            <person name="Cuomo C.A."/>
            <person name="Kistler H.C."/>
            <person name="Rep M."/>
        </authorList>
    </citation>
    <scope>GENOME REANNOTATION</scope>
    <source>
        <strain>ATCC MYA-4620 / CBS 123657 / FGSC 9075 / NRRL 31084 / PH-1</strain>
    </source>
</reference>
<reference key="3">
    <citation type="journal article" date="2015" name="BMC Genomics">
        <title>The completed genome sequence of the pathogenic ascomycete fungus Fusarium graminearum.</title>
        <authorList>
            <person name="King R."/>
            <person name="Urban M."/>
            <person name="Hammond-Kosack M.C.U."/>
            <person name="Hassani-Pak K."/>
            <person name="Hammond-Kosack K.E."/>
        </authorList>
    </citation>
    <scope>NUCLEOTIDE SEQUENCE [LARGE SCALE GENOMIC DNA]</scope>
    <source>
        <strain>ATCC MYA-4620 / CBS 123657 / FGSC 9075 / NRRL 31084 / PH-1</strain>
    </source>
</reference>
<reference key="4">
    <citation type="journal article" date="2013" name="Mol. Plant Pathol.">
        <title>Involvement of FgERG4 in ergosterol biosynthesis, vegetative differentiation and virulence in Fusarium graminearum.</title>
        <authorList>
            <person name="Liu X."/>
            <person name="Jiang J."/>
            <person name="Yin Y."/>
            <person name="Ma Z."/>
        </authorList>
    </citation>
    <scope>INDUCTION</scope>
</reference>
<reference key="5">
    <citation type="journal article" date="2013" name="New Phytol.">
        <title>Characterization of the sterol 14alpha-demethylases of Fusarium graminearum identifies a novel genus-specific CYP51 function.</title>
        <authorList>
            <person name="Fan J."/>
            <person name="Urban M."/>
            <person name="Parker J.E."/>
            <person name="Brewer H.C."/>
            <person name="Kelly S.L."/>
            <person name="Hammond-Kosack K.E."/>
            <person name="Fraaije B.A."/>
            <person name="Liu X."/>
            <person name="Cools H.J."/>
        </authorList>
    </citation>
    <scope>FUNCTION</scope>
    <scope>PATHWAY</scope>
</reference>
<name>ERG9_GIBZE</name>
<sequence length="462" mass="53515">MGYLYYLLHPYQLRSIIQWKVWHDPVHERDPSTESPELQECFRYLNLTSRSFAAVIQELNHELLVPITLFYLCLRGLDTIEDDMTLPLEKKIPILRNFHTTMNEDGWQFHESQEKDKELLEHFDVVITELKKIKAPYHEIITDMTRKMGNGMADYAENEEMIKNGVQTIEEYELYCHYVAGLVGEGLTRLFVESELANPKLAERPSLTESMGQFLQKTNIIRDLHEDWQDGRRWYPKEIWSQHVDKWEDMFNPAQQTKAIECVSHMVLDALKHSEECLFYMAGIKDQSVFNFVAIPEGMAIATLELVFRNPEVLKRNVKITKGDACKIMFECTQNLFTVCEVFKRYTRKIAKKNDPRDPNFLAISAQCAKIEQFIETLFPKQDPKKLTLTQAQAQNKEPTMDAGEAVVLFGVVIAALVCISGLMLGTAWFFGARFDHIFREASVFLPGREKATPMITGHEEL</sequence>
<keyword id="KW-0256">Endoplasmic reticulum</keyword>
<keyword id="KW-0444">Lipid biosynthesis</keyword>
<keyword id="KW-0443">Lipid metabolism</keyword>
<keyword id="KW-0472">Membrane</keyword>
<keyword id="KW-0492">Microsome</keyword>
<keyword id="KW-1185">Reference proteome</keyword>
<keyword id="KW-0752">Steroid biosynthesis</keyword>
<keyword id="KW-0753">Steroid metabolism</keyword>
<keyword id="KW-0756">Sterol biosynthesis</keyword>
<keyword id="KW-1207">Sterol metabolism</keyword>
<keyword id="KW-0808">Transferase</keyword>
<keyword id="KW-0812">Transmembrane</keyword>
<keyword id="KW-1133">Transmembrane helix</keyword>
<organism>
    <name type="scientific">Gibberella zeae (strain ATCC MYA-4620 / CBS 123657 / FGSC 9075 / NRRL 31084 / PH-1)</name>
    <name type="common">Wheat head blight fungus</name>
    <name type="synonym">Fusarium graminearum</name>
    <dbReference type="NCBI Taxonomy" id="229533"/>
    <lineage>
        <taxon>Eukaryota</taxon>
        <taxon>Fungi</taxon>
        <taxon>Dikarya</taxon>
        <taxon>Ascomycota</taxon>
        <taxon>Pezizomycotina</taxon>
        <taxon>Sordariomycetes</taxon>
        <taxon>Hypocreomycetidae</taxon>
        <taxon>Hypocreales</taxon>
        <taxon>Nectriaceae</taxon>
        <taxon>Fusarium</taxon>
    </lineage>
</organism>
<protein>
    <recommendedName>
        <fullName evidence="5">Squalene synthase ERG9</fullName>
        <shortName evidence="1">SQS</shortName>
        <shortName evidence="1">SS</shortName>
        <ecNumber evidence="1">2.5.1.21</ecNumber>
    </recommendedName>
    <alternativeName>
        <fullName evidence="5">Ergosterol biosynthetic protein 9</fullName>
    </alternativeName>
    <alternativeName>
        <fullName evidence="6">FPP:FPP farnesyltransferase ERG9</fullName>
    </alternativeName>
    <alternativeName>
        <fullName evidence="6">Farnesyl-diphosphate farnesyltransferase ERG9</fullName>
    </alternativeName>
</protein>
<dbReference type="EC" id="2.5.1.21" evidence="1"/>
<dbReference type="EMBL" id="HG970335">
    <property type="protein sequence ID" value="CEF84732.1"/>
    <property type="molecule type" value="Genomic_DNA"/>
</dbReference>
<dbReference type="RefSeq" id="XP_011328364.1">
    <property type="nucleotide sequence ID" value="XM_011330062.1"/>
</dbReference>
<dbReference type="SMR" id="V6RPN0"/>
<dbReference type="FunCoup" id="V6RPN0">
    <property type="interactions" value="322"/>
</dbReference>
<dbReference type="STRING" id="229533.V6RPN0"/>
<dbReference type="KEGG" id="fgr:FGSG_09381"/>
<dbReference type="VEuPathDB" id="FungiDB:FGRAMPH1_01G27225"/>
<dbReference type="eggNOG" id="KOG1459">
    <property type="taxonomic scope" value="Eukaryota"/>
</dbReference>
<dbReference type="HOGENOM" id="CLU_031981_2_1_1"/>
<dbReference type="InParanoid" id="V6RPN0"/>
<dbReference type="OrthoDB" id="7879at110618"/>
<dbReference type="UniPathway" id="UPA00767">
    <property type="reaction ID" value="UER00751"/>
</dbReference>
<dbReference type="UniPathway" id="UPA00768"/>
<dbReference type="Proteomes" id="UP000070720">
    <property type="component" value="Chromosome 4"/>
</dbReference>
<dbReference type="GO" id="GO:0005789">
    <property type="term" value="C:endoplasmic reticulum membrane"/>
    <property type="evidence" value="ECO:0007669"/>
    <property type="project" value="UniProtKB-SubCell"/>
</dbReference>
<dbReference type="GO" id="GO:0051996">
    <property type="term" value="F:squalene synthase [NAD(P)H] activity"/>
    <property type="evidence" value="ECO:0007669"/>
    <property type="project" value="UniProtKB-EC"/>
</dbReference>
<dbReference type="GO" id="GO:0006696">
    <property type="term" value="P:ergosterol biosynthetic process"/>
    <property type="evidence" value="ECO:0007669"/>
    <property type="project" value="TreeGrafter"/>
</dbReference>
<dbReference type="GO" id="GO:0045338">
    <property type="term" value="P:farnesyl diphosphate metabolic process"/>
    <property type="evidence" value="ECO:0007669"/>
    <property type="project" value="InterPro"/>
</dbReference>
<dbReference type="CDD" id="cd00683">
    <property type="entry name" value="Trans_IPPS_HH"/>
    <property type="match status" value="1"/>
</dbReference>
<dbReference type="FunFam" id="1.10.600.10:FF:000003">
    <property type="entry name" value="Farnesyl-diphosphate farnesyltransferase 1"/>
    <property type="match status" value="1"/>
</dbReference>
<dbReference type="Gene3D" id="1.10.600.10">
    <property type="entry name" value="Farnesyl Diphosphate Synthase"/>
    <property type="match status" value="1"/>
</dbReference>
<dbReference type="InterPro" id="IPR008949">
    <property type="entry name" value="Isoprenoid_synthase_dom_sf"/>
</dbReference>
<dbReference type="InterPro" id="IPR002060">
    <property type="entry name" value="Squ/phyt_synthse"/>
</dbReference>
<dbReference type="InterPro" id="IPR006449">
    <property type="entry name" value="Squal_synth-like"/>
</dbReference>
<dbReference type="InterPro" id="IPR019845">
    <property type="entry name" value="Squalene/phytoene_synthase_CS"/>
</dbReference>
<dbReference type="InterPro" id="IPR044844">
    <property type="entry name" value="Trans_IPPS_euk-type"/>
</dbReference>
<dbReference type="InterPro" id="IPR033904">
    <property type="entry name" value="Trans_IPPS_HH"/>
</dbReference>
<dbReference type="NCBIfam" id="TIGR01559">
    <property type="entry name" value="squal_synth"/>
    <property type="match status" value="1"/>
</dbReference>
<dbReference type="PANTHER" id="PTHR11626">
    <property type="entry name" value="FARNESYL-DIPHOSPHATE FARNESYLTRANSFERASE"/>
    <property type="match status" value="1"/>
</dbReference>
<dbReference type="PANTHER" id="PTHR11626:SF2">
    <property type="entry name" value="SQUALENE SYNTHASE"/>
    <property type="match status" value="1"/>
</dbReference>
<dbReference type="Pfam" id="PF00494">
    <property type="entry name" value="SQS_PSY"/>
    <property type="match status" value="1"/>
</dbReference>
<dbReference type="SFLD" id="SFLDS00005">
    <property type="entry name" value="Isoprenoid_Synthase_Type_I"/>
    <property type="match status" value="1"/>
</dbReference>
<dbReference type="SFLD" id="SFLDG01018">
    <property type="entry name" value="Squalene/Phytoene_Synthase_Lik"/>
    <property type="match status" value="1"/>
</dbReference>
<dbReference type="SUPFAM" id="SSF48576">
    <property type="entry name" value="Terpenoid synthases"/>
    <property type="match status" value="1"/>
</dbReference>
<dbReference type="PROSITE" id="PS01044">
    <property type="entry name" value="SQUALEN_PHYTOEN_SYN_1"/>
    <property type="match status" value="1"/>
</dbReference>
<evidence type="ECO:0000250" key="1">
    <source>
        <dbReference type="UniProtKB" id="P29704"/>
    </source>
</evidence>
<evidence type="ECO:0000255" key="2"/>
<evidence type="ECO:0000269" key="3">
    <source>
    </source>
</evidence>
<evidence type="ECO:0000269" key="4">
    <source>
    </source>
</evidence>
<evidence type="ECO:0000303" key="5">
    <source>
    </source>
</evidence>
<evidence type="ECO:0000305" key="6"/>
<evidence type="ECO:0000305" key="7">
    <source>
    </source>
</evidence>
<proteinExistence type="evidence at transcript level"/>